<comment type="function">
    <text evidence="2 3">Catalyzes the cis-trans isomerization of proline imidic peptide bonds in oligopeptides (By similarity). Exerts a strong chemotactic effect on leukocytes partly through activation of one of its membrane receptors BSG/CD147, initiating a signaling cascade that culminates in MAPK/ERK activation (By similarity). Activates endothelial cells (ECs) in a proinflammatory manner by stimulating activation of NF-kappa-B and ERK, JNK and p38 MAP-kinases and by inducing expression of adhesion molecules including SELE and VCAM1 (By similarity). Induces apoptosis in ECs by promoting the FOXO1-dependent expression of CCL2 and BCL2L11 which are involved in EC chemotaxis and apoptosis (By similarity). In response to oxidative stress, initiates proapoptotic and antiapoptotic signaling in ECs via activation of NF-kappa-B and AKT1 and up-regulation of antiapoptotic protein BCL2 (By similarity). Negatively regulates MAP3K5/ASK1 kinase activity, autophosphorylation and oxidative stress-induced apoptosis mediated by MAP3K5/ASK1 (By similarity). Necessary for the assembly of TARDBP in heterogeneous nuclear ribonucleoprotein (hnRNP) complexes and regulates TARDBP binding to RNA UG repeats and TARDBP-dependent expression of HDAC6, ATG7 and VCP which are involved in clearance of protein aggregates (By similarity). Plays an important role in platelet activation and aggregation (By similarity). Regulates calcium mobilization and integrin ITGA2B:ITGB3 bidirectional signaling via increased ROS production as well as by facilitating the interaction between integrin and the cell cytoskeleton (By similarity). Binds heparan sulfate glycosaminoglycans (By similarity).</text>
</comment>
<comment type="catalytic activity">
    <reaction evidence="3">
        <text>[protein]-peptidylproline (omega=180) = [protein]-peptidylproline (omega=0)</text>
        <dbReference type="Rhea" id="RHEA:16237"/>
        <dbReference type="Rhea" id="RHEA-COMP:10747"/>
        <dbReference type="Rhea" id="RHEA-COMP:10748"/>
        <dbReference type="ChEBI" id="CHEBI:83833"/>
        <dbReference type="ChEBI" id="CHEBI:83834"/>
        <dbReference type="EC" id="5.2.1.8"/>
    </reaction>
</comment>
<comment type="activity regulation">
    <text evidence="3">Binds cyclosporin A (CsA). CsA mediates some of its effects via an inhibitory action on PPIase.</text>
</comment>
<comment type="subunit">
    <text evidence="2 3">Interacts with protein phosphatase PPP3CA/calcineurin A (By similarity). Interacts with isoform 2 of BSG/CD147 (By similarity). Interacts with FOXO1; the interaction promotes FOXO1 dephosphorylation, nuclear accumulation and transcriptional activity (By similarity). Interacts with integrin ITGA2B:ITGB3; the interaction is ROS and peptidyl-prolyl cis-trans isomerase (PPIase) activity-dependent and is increased in the presence of thrombin (By similarity). Interacts with MAP3K5 (By similarity). Interacts with TARDBP; the interaction is dependent on the RNA-binding activity of TARDBP and the PPIase activity of PPIA/CYPA and the acetylation of PPIA/CYPA at Lys-125 favors the interaction (By similarity). Interacts with HNRNPA1, HNRNPA2B1, HNRNPC, RBMX, HNRNPK and HNRNPM (By similarity).</text>
</comment>
<comment type="subcellular location">
    <subcellularLocation>
        <location evidence="3">Cytoplasm</location>
    </subcellularLocation>
    <subcellularLocation>
        <location evidence="3">Secreted</location>
    </subcellularLocation>
    <subcellularLocation>
        <location evidence="3">Nucleus</location>
    </subcellularLocation>
    <text evidence="3">Secretion occurs in response to oxidative stress in vascular smooth muscle through a vesicular secretory pathway that involves actin remodeling and myosin II activation, and mediates ERK1/2 activation.</text>
</comment>
<comment type="PTM">
    <text evidence="3">Acetylation at Lys-125 markedly inhibits catalysis of cis to trans isomerization (By similarity). PPIA acetylation also antagonizes the immunosuppressive effects of cyclosporine by inhibiting the sequential steps of cyclosporine binding and calcineurin inhibition (By similarity). Acetylation at Lys-125 favors the interaction with TARDBP (By similarity).</text>
</comment>
<comment type="similarity">
    <text evidence="5">Belongs to the cyclophilin-type PPIase family. PPIase A subfamily.</text>
</comment>
<feature type="chain" id="PRO_0000423234" description="Peptidyl-prolyl cis-trans isomerase A">
    <location>
        <begin position="1"/>
        <end position="164"/>
    </location>
</feature>
<feature type="initiator methionine" description="Removed; alternate" evidence="3">
    <location>
        <position position="1"/>
    </location>
</feature>
<feature type="chain" id="PRO_0000233040" description="Peptidyl-prolyl cis-trans isomerase A, N-terminally processed">
    <location>
        <begin position="2"/>
        <end position="164"/>
    </location>
</feature>
<feature type="domain" description="PPIase cyclophilin-type" evidence="4">
    <location>
        <begin position="7"/>
        <end position="163"/>
    </location>
</feature>
<feature type="modified residue" description="N-acetylmethionine" evidence="3">
    <location>
        <position position="1"/>
    </location>
</feature>
<feature type="modified residue" description="N-acetylvaline; in Peptidyl-prolyl cis-trans isomerase A, N-terminally processed" evidence="3">
    <location>
        <position position="2"/>
    </location>
</feature>
<feature type="modified residue" description="N6-acetyllysine; alternate" evidence="3">
    <location>
        <position position="28"/>
    </location>
</feature>
<feature type="modified residue" description="N6-acetyllysine" evidence="3">
    <location>
        <position position="44"/>
    </location>
</feature>
<feature type="modified residue" description="N6-acetyllysine" evidence="3">
    <location>
        <position position="76"/>
    </location>
</feature>
<feature type="modified residue" description="Phosphoserine" evidence="3">
    <location>
        <position position="77"/>
    </location>
</feature>
<feature type="modified residue" description="N6-acetyllysine; alternate" evidence="3">
    <location>
        <position position="82"/>
    </location>
</feature>
<feature type="modified residue" description="Phosphothreonine" evidence="3">
    <location>
        <position position="93"/>
    </location>
</feature>
<feature type="modified residue" description="N6-acetyllysine" evidence="3">
    <location>
        <position position="125"/>
    </location>
</feature>
<feature type="modified residue" description="N6-acetyllysine" evidence="3">
    <location>
        <position position="131"/>
    </location>
</feature>
<feature type="modified residue" description="N6-acetyllysine" evidence="2">
    <location>
        <position position="133"/>
    </location>
</feature>
<feature type="disulfide bond" evidence="1">
    <location>
        <begin position="62"/>
        <end position="161"/>
    </location>
</feature>
<feature type="cross-link" description="Glycyl lysine isopeptide (Lys-Gly) (interchain with G-Cter in SUMO2); alternate" evidence="3">
    <location>
        <position position="28"/>
    </location>
</feature>
<feature type="cross-link" description="Glycyl lysine isopeptide (Lys-Gly) (interchain with G-Cter in ubiquitin); alternate" evidence="3">
    <location>
        <position position="28"/>
    </location>
</feature>
<feature type="cross-link" description="Glycyl lysine isopeptide (Lys-Gly) (interchain with G-Cter in SUMO2); alternate" evidence="3">
    <location>
        <position position="82"/>
    </location>
</feature>
<name>PPIA_AOTTR</name>
<keyword id="KW-0007">Acetylation</keyword>
<keyword id="KW-0053">Apoptosis</keyword>
<keyword id="KW-0963">Cytoplasm</keyword>
<keyword id="KW-1015">Disulfide bond</keyword>
<keyword id="KW-0413">Isomerase</keyword>
<keyword id="KW-1017">Isopeptide bond</keyword>
<keyword id="KW-0539">Nucleus</keyword>
<keyword id="KW-0597">Phosphoprotein</keyword>
<keyword id="KW-0697">Rotamase</keyword>
<keyword id="KW-0964">Secreted</keyword>
<keyword id="KW-0832">Ubl conjugation</keyword>
<proteinExistence type="evidence at transcript level"/>
<organism>
    <name type="scientific">Aotus trivirgatus</name>
    <name type="common">Three-striped night monkey</name>
    <name type="synonym">Douroucouli</name>
    <dbReference type="NCBI Taxonomy" id="9505"/>
    <lineage>
        <taxon>Eukaryota</taxon>
        <taxon>Metazoa</taxon>
        <taxon>Chordata</taxon>
        <taxon>Craniata</taxon>
        <taxon>Vertebrata</taxon>
        <taxon>Euteleostomi</taxon>
        <taxon>Mammalia</taxon>
        <taxon>Eutheria</taxon>
        <taxon>Euarchontoglires</taxon>
        <taxon>Primates</taxon>
        <taxon>Haplorrhini</taxon>
        <taxon>Platyrrhini</taxon>
        <taxon>Aotidae</taxon>
        <taxon>Aotus</taxon>
    </lineage>
</organism>
<evidence type="ECO:0000250" key="1"/>
<evidence type="ECO:0000250" key="2">
    <source>
        <dbReference type="UniProtKB" id="P17742"/>
    </source>
</evidence>
<evidence type="ECO:0000250" key="3">
    <source>
        <dbReference type="UniProtKB" id="P62937"/>
    </source>
</evidence>
<evidence type="ECO:0000255" key="4">
    <source>
        <dbReference type="PROSITE-ProRule" id="PRU00156"/>
    </source>
</evidence>
<evidence type="ECO:0000305" key="5"/>
<protein>
    <recommendedName>
        <fullName>Peptidyl-prolyl cis-trans isomerase A</fullName>
        <shortName>PPIase A</shortName>
        <ecNumber evidence="3">5.2.1.8</ecNumber>
    </recommendedName>
    <alternativeName>
        <fullName>Cyclophilin A</fullName>
    </alternativeName>
    <alternativeName>
        <fullName>Cyclosporin A-binding protein</fullName>
    </alternativeName>
    <alternativeName>
        <fullName>Rotamase A</fullName>
    </alternativeName>
    <component>
        <recommendedName>
            <fullName>Peptidyl-prolyl cis-trans isomerase A, N-terminally processed</fullName>
        </recommendedName>
    </component>
</protein>
<gene>
    <name type="primary">PPIA</name>
</gene>
<dbReference type="EC" id="5.2.1.8" evidence="3"/>
<dbReference type="EMBL" id="AY646200">
    <property type="protein sequence ID" value="AAT73779.1"/>
    <property type="molecule type" value="mRNA"/>
</dbReference>
<dbReference type="SMR" id="Q6DTV9"/>
<dbReference type="GO" id="GO:0005737">
    <property type="term" value="C:cytoplasm"/>
    <property type="evidence" value="ECO:0000250"/>
    <property type="project" value="UniProtKB"/>
</dbReference>
<dbReference type="GO" id="GO:0005829">
    <property type="term" value="C:cytosol"/>
    <property type="evidence" value="ECO:0000250"/>
    <property type="project" value="UniProtKB"/>
</dbReference>
<dbReference type="GO" id="GO:0005576">
    <property type="term" value="C:extracellular region"/>
    <property type="evidence" value="ECO:0000250"/>
    <property type="project" value="UniProtKB"/>
</dbReference>
<dbReference type="GO" id="GO:0005634">
    <property type="term" value="C:nucleus"/>
    <property type="evidence" value="ECO:0000250"/>
    <property type="project" value="UniProtKB"/>
</dbReference>
<dbReference type="GO" id="GO:0016018">
    <property type="term" value="F:cyclosporin A binding"/>
    <property type="evidence" value="ECO:0007669"/>
    <property type="project" value="TreeGrafter"/>
</dbReference>
<dbReference type="GO" id="GO:1904399">
    <property type="term" value="F:heparan sulfate binding"/>
    <property type="evidence" value="ECO:0000250"/>
    <property type="project" value="UniProtKB"/>
</dbReference>
<dbReference type="GO" id="GO:0005178">
    <property type="term" value="F:integrin binding"/>
    <property type="evidence" value="ECO:0000250"/>
    <property type="project" value="UniProtKB"/>
</dbReference>
<dbReference type="GO" id="GO:0003755">
    <property type="term" value="F:peptidyl-prolyl cis-trans isomerase activity"/>
    <property type="evidence" value="ECO:0000250"/>
    <property type="project" value="UniProtKB"/>
</dbReference>
<dbReference type="GO" id="GO:0032148">
    <property type="term" value="P:activation of protein kinase B activity"/>
    <property type="evidence" value="ECO:0000250"/>
    <property type="project" value="UniProtKB"/>
</dbReference>
<dbReference type="GO" id="GO:0006915">
    <property type="term" value="P:apoptotic process"/>
    <property type="evidence" value="ECO:0000250"/>
    <property type="project" value="UniProtKB"/>
</dbReference>
<dbReference type="GO" id="GO:0060352">
    <property type="term" value="P:cell adhesion molecule production"/>
    <property type="evidence" value="ECO:0000250"/>
    <property type="project" value="UniProtKB"/>
</dbReference>
<dbReference type="GO" id="GO:0034599">
    <property type="term" value="P:cellular response to oxidative stress"/>
    <property type="evidence" value="ECO:0000250"/>
    <property type="project" value="UniProtKB"/>
</dbReference>
<dbReference type="GO" id="GO:0042118">
    <property type="term" value="P:endothelial cell activation"/>
    <property type="evidence" value="ECO:0000250"/>
    <property type="project" value="UniProtKB"/>
</dbReference>
<dbReference type="GO" id="GO:0030595">
    <property type="term" value="P:leukocyte chemotaxis"/>
    <property type="evidence" value="ECO:0000250"/>
    <property type="project" value="UniProtKB"/>
</dbReference>
<dbReference type="GO" id="GO:1902176">
    <property type="term" value="P:negative regulation of oxidative stress-induced intrinsic apoptotic signaling pathway"/>
    <property type="evidence" value="ECO:0000250"/>
    <property type="project" value="UniProtKB"/>
</dbReference>
<dbReference type="GO" id="GO:0061944">
    <property type="term" value="P:negative regulation of protein K48-linked ubiquitination"/>
    <property type="evidence" value="ECO:0000250"/>
    <property type="project" value="UniProtKB"/>
</dbReference>
<dbReference type="GO" id="GO:0006469">
    <property type="term" value="P:negative regulation of protein kinase activity"/>
    <property type="evidence" value="ECO:0000250"/>
    <property type="project" value="UniProtKB"/>
</dbReference>
<dbReference type="GO" id="GO:0001933">
    <property type="term" value="P:negative regulation of protein phosphorylation"/>
    <property type="evidence" value="ECO:0000250"/>
    <property type="project" value="UniProtKB"/>
</dbReference>
<dbReference type="GO" id="GO:0032873">
    <property type="term" value="P:negative regulation of stress-activated MAPK cascade"/>
    <property type="evidence" value="ECO:0000250"/>
    <property type="project" value="UniProtKB"/>
</dbReference>
<dbReference type="GO" id="GO:0030593">
    <property type="term" value="P:neutrophil chemotaxis"/>
    <property type="evidence" value="ECO:0000250"/>
    <property type="project" value="UniProtKB"/>
</dbReference>
<dbReference type="GO" id="GO:0030168">
    <property type="term" value="P:platelet activation"/>
    <property type="evidence" value="ECO:0000250"/>
    <property type="project" value="UniProtKB"/>
</dbReference>
<dbReference type="GO" id="GO:0070527">
    <property type="term" value="P:platelet aggregation"/>
    <property type="evidence" value="ECO:0000250"/>
    <property type="project" value="UniProtKB"/>
</dbReference>
<dbReference type="GO" id="GO:0043410">
    <property type="term" value="P:positive regulation of MAPK cascade"/>
    <property type="evidence" value="ECO:0000250"/>
    <property type="project" value="UniProtKB"/>
</dbReference>
<dbReference type="GO" id="GO:0051092">
    <property type="term" value="P:positive regulation of NF-kappaB transcription factor activity"/>
    <property type="evidence" value="ECO:0000250"/>
    <property type="project" value="UniProtKB"/>
</dbReference>
<dbReference type="GO" id="GO:0001934">
    <property type="term" value="P:positive regulation of protein phosphorylation"/>
    <property type="evidence" value="ECO:0000250"/>
    <property type="project" value="UniProtKB"/>
</dbReference>
<dbReference type="GO" id="GO:0006457">
    <property type="term" value="P:protein folding"/>
    <property type="evidence" value="ECO:0007669"/>
    <property type="project" value="InterPro"/>
</dbReference>
<dbReference type="GO" id="GO:0000413">
    <property type="term" value="P:protein peptidyl-prolyl isomerization"/>
    <property type="evidence" value="ECO:0000250"/>
    <property type="project" value="UniProtKB"/>
</dbReference>
<dbReference type="GO" id="GO:2001233">
    <property type="term" value="P:regulation of apoptotic signaling pathway"/>
    <property type="evidence" value="ECO:0000250"/>
    <property type="project" value="UniProtKB"/>
</dbReference>
<dbReference type="GO" id="GO:0045069">
    <property type="term" value="P:regulation of viral genome replication"/>
    <property type="evidence" value="ECO:0000250"/>
    <property type="project" value="UniProtKB"/>
</dbReference>
<dbReference type="CDD" id="cd01926">
    <property type="entry name" value="cyclophilin_ABH_like"/>
    <property type="match status" value="1"/>
</dbReference>
<dbReference type="FunFam" id="2.40.100.10:FF:000011">
    <property type="entry name" value="Peptidyl-prolyl cis-trans isomerase A"/>
    <property type="match status" value="1"/>
</dbReference>
<dbReference type="Gene3D" id="2.40.100.10">
    <property type="entry name" value="Cyclophilin-like"/>
    <property type="match status" value="1"/>
</dbReference>
<dbReference type="InterPro" id="IPR029000">
    <property type="entry name" value="Cyclophilin-like_dom_sf"/>
</dbReference>
<dbReference type="InterPro" id="IPR024936">
    <property type="entry name" value="Cyclophilin-type_PPIase"/>
</dbReference>
<dbReference type="InterPro" id="IPR020892">
    <property type="entry name" value="Cyclophilin-type_PPIase_CS"/>
</dbReference>
<dbReference type="InterPro" id="IPR002130">
    <property type="entry name" value="Cyclophilin-type_PPIase_dom"/>
</dbReference>
<dbReference type="PANTHER" id="PTHR11071">
    <property type="entry name" value="PEPTIDYL-PROLYL CIS-TRANS ISOMERASE"/>
    <property type="match status" value="1"/>
</dbReference>
<dbReference type="PANTHER" id="PTHR11071:SF490">
    <property type="entry name" value="PEPTIDYL-PROLYL CIS-TRANS ISOMERASE A"/>
    <property type="match status" value="1"/>
</dbReference>
<dbReference type="Pfam" id="PF00160">
    <property type="entry name" value="Pro_isomerase"/>
    <property type="match status" value="1"/>
</dbReference>
<dbReference type="PIRSF" id="PIRSF001467">
    <property type="entry name" value="Peptidylpro_ismrse"/>
    <property type="match status" value="1"/>
</dbReference>
<dbReference type="PRINTS" id="PR00153">
    <property type="entry name" value="CSAPPISMRASE"/>
</dbReference>
<dbReference type="SUPFAM" id="SSF50891">
    <property type="entry name" value="Cyclophilin-like"/>
    <property type="match status" value="1"/>
</dbReference>
<dbReference type="PROSITE" id="PS00170">
    <property type="entry name" value="CSA_PPIASE_1"/>
    <property type="match status" value="1"/>
</dbReference>
<dbReference type="PROSITE" id="PS50072">
    <property type="entry name" value="CSA_PPIASE_2"/>
    <property type="match status" value="1"/>
</dbReference>
<accession>Q6DTV9</accession>
<reference key="1">
    <citation type="journal article" date="2004" name="Nature">
        <title>Cyclophilin A retrotransposition into TRIM5 explains owl monkey resistance to HIV-1.</title>
        <authorList>
            <person name="Sayah D.M."/>
            <person name="Sokolskaja E."/>
            <person name="Berthoux L."/>
            <person name="Luban J."/>
        </authorList>
    </citation>
    <scope>NUCLEOTIDE SEQUENCE [MRNA]</scope>
</reference>
<sequence>MVNPTVFFDIAVDGEPLGRVSFELFADKVPKTAENFRALSTGEKGFGYKGSCFHRIIPGFMCQGGDFTRHNGTGGKSIYGEKFDDENFILKHTGPGILSMANAGPNTNGSQFFICTVKTEWLDGKHVVFGKVKEGMNIVEAMERFGSRNGKTSKKITIADCGQL</sequence>